<organism>
    <name type="scientific">Pan troglodytes</name>
    <name type="common">Chimpanzee</name>
    <dbReference type="NCBI Taxonomy" id="9598"/>
    <lineage>
        <taxon>Eukaryota</taxon>
        <taxon>Metazoa</taxon>
        <taxon>Chordata</taxon>
        <taxon>Craniata</taxon>
        <taxon>Vertebrata</taxon>
        <taxon>Euteleostomi</taxon>
        <taxon>Mammalia</taxon>
        <taxon>Eutheria</taxon>
        <taxon>Euarchontoglires</taxon>
        <taxon>Primates</taxon>
        <taxon>Haplorrhini</taxon>
        <taxon>Catarrhini</taxon>
        <taxon>Hominidae</taxon>
        <taxon>Pan</taxon>
    </lineage>
</organism>
<keyword id="KW-1015">Disulfide bond</keyword>
<keyword id="KW-0325">Glycoprotein</keyword>
<keyword id="KW-0391">Immunity</keyword>
<keyword id="KW-0472">Membrane</keyword>
<keyword id="KW-0490">MHC I</keyword>
<keyword id="KW-0597">Phosphoprotein</keyword>
<keyword id="KW-1185">Reference proteome</keyword>
<keyword id="KW-0732">Signal</keyword>
<keyword id="KW-0812">Transmembrane</keyword>
<keyword id="KW-1133">Transmembrane helix</keyword>
<accession>P13750</accession>
<protein>
    <recommendedName>
        <fullName>Patr class I histocompatibility antigen, B-1 alpha chain</fullName>
    </recommendedName>
    <alternativeName>
        <fullName>ChLa class I histocompatibility antigen, B-1 alpha chain</fullName>
    </alternativeName>
</protein>
<reference key="1">
    <citation type="journal article" date="1988" name="EMBO J.">
        <title>Nucleotide sequences of chimpanzee MHC class I alleles: evidence for trans-species mode of evolution.</title>
        <authorList>
            <person name="Mayer W.E."/>
            <person name="Jonker M."/>
            <person name="Klein D."/>
            <person name="Ivanyi P."/>
            <person name="van Seventer G."/>
            <person name="Klein J."/>
        </authorList>
    </citation>
    <scope>NUCLEOTIDE SEQUENCE [MRNA]</scope>
</reference>
<reference key="2">
    <citation type="submission" date="1989-02" db="EMBL/GenBank/DDBJ databases">
        <authorList>
            <person name="Mayer W."/>
        </authorList>
    </citation>
    <scope>SEQUENCE REVISION</scope>
</reference>
<proteinExistence type="evidence at transcript level"/>
<sequence length="359" mass="40174">APRTVLLLLSAALALTETWAGSHSMRYFYTSVSRPGRGEPRFITVGYVDDTQFVRFDSDAASPRMEPRAPWIEQEGPEYWDRETRNMKASAQTDRENLRIALRYYNQSEAGSHTWQTMYGCDMGPDGRLLRGYGQYAYDGKDYIALNEDLSSWTAADTAAQITQRKWEAAREAEQRRAYLEGTCVEWLRRYLENGKETLQRADPPKTHVTHHPISDHEATLRCWALGFYPAEITLTWQRDGEDQTQDTELVETRPEGDRTFQKWAAVVVPSGEEQRYTCHVQHEGLPKPLTLRWEPSSQSTIPIVGIVAGLAVLVVTVAVVAVVAAVMCRRKSSGGKGGSYSQAASSDSAQGSDVSLTA</sequence>
<feature type="signal peptide" evidence="1">
    <location>
        <begin position="1" status="less than"/>
        <end position="20"/>
    </location>
</feature>
<feature type="chain" id="PRO_0000018916" description="Patr class I histocompatibility antigen, B-1 alpha chain">
    <location>
        <begin position="21"/>
        <end position="359"/>
    </location>
</feature>
<feature type="topological domain" description="Extracellular" evidence="3">
    <location>
        <begin position="21"/>
        <end position="305"/>
    </location>
</feature>
<feature type="transmembrane region" description="Helical" evidence="3">
    <location>
        <begin position="306"/>
        <end position="329"/>
    </location>
</feature>
<feature type="topological domain" description="Cytoplasmic" evidence="3">
    <location>
        <begin position="330"/>
        <end position="359"/>
    </location>
</feature>
<feature type="domain" description="Ig-like C1-type">
    <location>
        <begin position="205"/>
        <end position="291"/>
    </location>
</feature>
<feature type="region of interest" description="Alpha-1">
    <location>
        <begin position="21"/>
        <end position="110"/>
    </location>
</feature>
<feature type="region of interest" description="Alpha-2">
    <location>
        <begin position="111"/>
        <end position="202"/>
    </location>
</feature>
<feature type="region of interest" description="Alpha-3">
    <location>
        <begin position="203"/>
        <end position="294"/>
    </location>
</feature>
<feature type="region of interest" description="Connecting peptide">
    <location>
        <begin position="295"/>
        <end position="305"/>
    </location>
</feature>
<feature type="region of interest" description="Disordered" evidence="5">
    <location>
        <begin position="332"/>
        <end position="359"/>
    </location>
</feature>
<feature type="compositionally biased region" description="Low complexity" evidence="5">
    <location>
        <begin position="340"/>
        <end position="359"/>
    </location>
</feature>
<feature type="modified residue" description="Phosphoserine" evidence="2">
    <location>
        <position position="353"/>
    </location>
</feature>
<feature type="modified residue" description="Phosphoserine" evidence="2">
    <location>
        <position position="356"/>
    </location>
</feature>
<feature type="glycosylation site" description="N-linked (GlcNAc...) asparagine" evidence="1">
    <location>
        <position position="106"/>
    </location>
</feature>
<feature type="disulfide bond" evidence="4">
    <location>
        <begin position="121"/>
        <end position="184"/>
    </location>
</feature>
<feature type="disulfide bond" evidence="4">
    <location>
        <begin position="223"/>
        <end position="279"/>
    </location>
</feature>
<feature type="non-terminal residue">
    <location>
        <position position="1"/>
    </location>
</feature>
<evidence type="ECO:0000250" key="1"/>
<evidence type="ECO:0000250" key="2">
    <source>
        <dbReference type="UniProtKB" id="P01900"/>
    </source>
</evidence>
<evidence type="ECO:0000255" key="3"/>
<evidence type="ECO:0000255" key="4">
    <source>
        <dbReference type="PROSITE-ProRule" id="PRU00114"/>
    </source>
</evidence>
<evidence type="ECO:0000256" key="5">
    <source>
        <dbReference type="SAM" id="MobiDB-lite"/>
    </source>
</evidence>
<evidence type="ECO:0000305" key="6"/>
<name>1B01_PANTR</name>
<comment type="function">
    <text>Involved in the presentation of foreign antigens to the immune system.</text>
</comment>
<comment type="subunit">
    <text>Heterodimer of an alpha chain and a beta chain (beta-2-microglobulin).</text>
</comment>
<comment type="subcellular location">
    <subcellularLocation>
        <location>Membrane</location>
        <topology>Single-pass type I membrane protein</topology>
    </subcellularLocation>
</comment>
<comment type="similarity">
    <text evidence="6">Belongs to the MHC class I family.</text>
</comment>
<dbReference type="EMBL" id="X13115">
    <property type="protein sequence ID" value="CAA31507.1"/>
    <property type="molecule type" value="mRNA"/>
</dbReference>
<dbReference type="SMR" id="P13750"/>
<dbReference type="InParanoid" id="P13750"/>
<dbReference type="Proteomes" id="UP000002277">
    <property type="component" value="Unplaced"/>
</dbReference>
<dbReference type="GO" id="GO:0031901">
    <property type="term" value="C:early endosome membrane"/>
    <property type="evidence" value="ECO:0007669"/>
    <property type="project" value="UniProtKB-ARBA"/>
</dbReference>
<dbReference type="GO" id="GO:0012507">
    <property type="term" value="C:ER to Golgi transport vesicle membrane"/>
    <property type="evidence" value="ECO:0007669"/>
    <property type="project" value="UniProtKB-ARBA"/>
</dbReference>
<dbReference type="GO" id="GO:0009897">
    <property type="term" value="C:external side of plasma membrane"/>
    <property type="evidence" value="ECO:0000318"/>
    <property type="project" value="GO_Central"/>
</dbReference>
<dbReference type="GO" id="GO:0005615">
    <property type="term" value="C:extracellular space"/>
    <property type="evidence" value="ECO:0000318"/>
    <property type="project" value="GO_Central"/>
</dbReference>
<dbReference type="GO" id="GO:0098553">
    <property type="term" value="C:lumenal side of endoplasmic reticulum membrane"/>
    <property type="evidence" value="ECO:0007669"/>
    <property type="project" value="UniProtKB-ARBA"/>
</dbReference>
<dbReference type="GO" id="GO:0042612">
    <property type="term" value="C:MHC class I protein complex"/>
    <property type="evidence" value="ECO:0007669"/>
    <property type="project" value="UniProtKB-KW"/>
</dbReference>
<dbReference type="GO" id="GO:0030670">
    <property type="term" value="C:phagocytic vesicle membrane"/>
    <property type="evidence" value="ECO:0007669"/>
    <property type="project" value="UniProtKB-ARBA"/>
</dbReference>
<dbReference type="GO" id="GO:0055038">
    <property type="term" value="C:recycling endosome membrane"/>
    <property type="evidence" value="ECO:0007669"/>
    <property type="project" value="UniProtKB-ARBA"/>
</dbReference>
<dbReference type="GO" id="GO:0042605">
    <property type="term" value="F:peptide antigen binding"/>
    <property type="evidence" value="ECO:0000318"/>
    <property type="project" value="GO_Central"/>
</dbReference>
<dbReference type="GO" id="GO:0005102">
    <property type="term" value="F:signaling receptor binding"/>
    <property type="evidence" value="ECO:0000318"/>
    <property type="project" value="GO_Central"/>
</dbReference>
<dbReference type="GO" id="GO:0002486">
    <property type="term" value="P:antigen processing and presentation of endogenous peptide antigen via MHC class I via ER pathway, TAP-independent"/>
    <property type="evidence" value="ECO:0000318"/>
    <property type="project" value="GO_Central"/>
</dbReference>
<dbReference type="GO" id="GO:0002476">
    <property type="term" value="P:antigen processing and presentation of endogenous peptide antigen via MHC class Ib"/>
    <property type="evidence" value="ECO:0000318"/>
    <property type="project" value="GO_Central"/>
</dbReference>
<dbReference type="GO" id="GO:0006955">
    <property type="term" value="P:immune response"/>
    <property type="evidence" value="ECO:0000318"/>
    <property type="project" value="GO_Central"/>
</dbReference>
<dbReference type="GO" id="GO:0001916">
    <property type="term" value="P:positive regulation of T cell mediated cytotoxicity"/>
    <property type="evidence" value="ECO:0000318"/>
    <property type="project" value="GO_Central"/>
</dbReference>
<dbReference type="CDD" id="cd21026">
    <property type="entry name" value="IgC1_MHC_Ia_HLA-B"/>
    <property type="match status" value="1"/>
</dbReference>
<dbReference type="FunFam" id="2.60.40.10:FF:000014">
    <property type="entry name" value="H-2 class I histocompatibility antigen, alpha chain"/>
    <property type="match status" value="1"/>
</dbReference>
<dbReference type="FunFam" id="3.30.500.10:FF:000001">
    <property type="entry name" value="H-2 class I histocompatibility antigen, alpha chain"/>
    <property type="match status" value="1"/>
</dbReference>
<dbReference type="Gene3D" id="2.60.40.10">
    <property type="entry name" value="Immunoglobulins"/>
    <property type="match status" value="1"/>
</dbReference>
<dbReference type="Gene3D" id="3.30.500.10">
    <property type="entry name" value="MHC class I-like antigen recognition-like"/>
    <property type="match status" value="1"/>
</dbReference>
<dbReference type="InterPro" id="IPR007110">
    <property type="entry name" value="Ig-like_dom"/>
</dbReference>
<dbReference type="InterPro" id="IPR036179">
    <property type="entry name" value="Ig-like_dom_sf"/>
</dbReference>
<dbReference type="InterPro" id="IPR013783">
    <property type="entry name" value="Ig-like_fold"/>
</dbReference>
<dbReference type="InterPro" id="IPR003006">
    <property type="entry name" value="Ig/MHC_CS"/>
</dbReference>
<dbReference type="InterPro" id="IPR003597">
    <property type="entry name" value="Ig_C1-set"/>
</dbReference>
<dbReference type="InterPro" id="IPR050208">
    <property type="entry name" value="MHC_class-I_related"/>
</dbReference>
<dbReference type="InterPro" id="IPR011161">
    <property type="entry name" value="MHC_I-like_Ag-recog"/>
</dbReference>
<dbReference type="InterPro" id="IPR037055">
    <property type="entry name" value="MHC_I-like_Ag-recog_sf"/>
</dbReference>
<dbReference type="InterPro" id="IPR011162">
    <property type="entry name" value="MHC_I/II-like_Ag-recog"/>
</dbReference>
<dbReference type="InterPro" id="IPR001039">
    <property type="entry name" value="MHC_I_a_a1/a2"/>
</dbReference>
<dbReference type="InterPro" id="IPR010579">
    <property type="entry name" value="MHC_I_a_C"/>
</dbReference>
<dbReference type="PANTHER" id="PTHR16675:SF279">
    <property type="entry name" value="CLASS I HISTOCOMPATIBILITY ANTIGEN, GOGO-B*0102 ALPHA CHAIN"/>
    <property type="match status" value="1"/>
</dbReference>
<dbReference type="PANTHER" id="PTHR16675">
    <property type="entry name" value="MHC CLASS I-RELATED"/>
    <property type="match status" value="1"/>
</dbReference>
<dbReference type="Pfam" id="PF07654">
    <property type="entry name" value="C1-set"/>
    <property type="match status" value="1"/>
</dbReference>
<dbReference type="Pfam" id="PF00129">
    <property type="entry name" value="MHC_I"/>
    <property type="match status" value="1"/>
</dbReference>
<dbReference type="Pfam" id="PF06623">
    <property type="entry name" value="MHC_I_C"/>
    <property type="match status" value="1"/>
</dbReference>
<dbReference type="PRINTS" id="PR01638">
    <property type="entry name" value="MHCCLASSI"/>
</dbReference>
<dbReference type="SMART" id="SM00407">
    <property type="entry name" value="IGc1"/>
    <property type="match status" value="1"/>
</dbReference>
<dbReference type="SUPFAM" id="SSF48726">
    <property type="entry name" value="Immunoglobulin"/>
    <property type="match status" value="1"/>
</dbReference>
<dbReference type="SUPFAM" id="SSF54452">
    <property type="entry name" value="MHC antigen-recognition domain"/>
    <property type="match status" value="1"/>
</dbReference>
<dbReference type="PROSITE" id="PS50835">
    <property type="entry name" value="IG_LIKE"/>
    <property type="match status" value="1"/>
</dbReference>
<dbReference type="PROSITE" id="PS00290">
    <property type="entry name" value="IG_MHC"/>
    <property type="match status" value="1"/>
</dbReference>